<feature type="chain" id="PRO_0000290945" description="Small ribosomal subunit protein uS8">
    <location>
        <begin position="1"/>
        <end position="132"/>
    </location>
</feature>
<proteinExistence type="inferred from homology"/>
<dbReference type="EMBL" id="AM295007">
    <property type="protein sequence ID" value="CAM29400.1"/>
    <property type="molecule type" value="Genomic_DNA"/>
</dbReference>
<dbReference type="RefSeq" id="WP_002987748.1">
    <property type="nucleotide sequence ID" value="NC_009332.1"/>
</dbReference>
<dbReference type="SMR" id="A2RC28"/>
<dbReference type="GeneID" id="69900040"/>
<dbReference type="KEGG" id="spf:SpyM50058"/>
<dbReference type="HOGENOM" id="CLU_098428_0_2_9"/>
<dbReference type="GO" id="GO:1990904">
    <property type="term" value="C:ribonucleoprotein complex"/>
    <property type="evidence" value="ECO:0007669"/>
    <property type="project" value="UniProtKB-KW"/>
</dbReference>
<dbReference type="GO" id="GO:0005840">
    <property type="term" value="C:ribosome"/>
    <property type="evidence" value="ECO:0007669"/>
    <property type="project" value="UniProtKB-KW"/>
</dbReference>
<dbReference type="GO" id="GO:0019843">
    <property type="term" value="F:rRNA binding"/>
    <property type="evidence" value="ECO:0007669"/>
    <property type="project" value="UniProtKB-UniRule"/>
</dbReference>
<dbReference type="GO" id="GO:0003735">
    <property type="term" value="F:structural constituent of ribosome"/>
    <property type="evidence" value="ECO:0007669"/>
    <property type="project" value="InterPro"/>
</dbReference>
<dbReference type="GO" id="GO:0006412">
    <property type="term" value="P:translation"/>
    <property type="evidence" value="ECO:0007669"/>
    <property type="project" value="UniProtKB-UniRule"/>
</dbReference>
<dbReference type="FunFam" id="3.30.1370.30:FF:000002">
    <property type="entry name" value="30S ribosomal protein S8"/>
    <property type="match status" value="1"/>
</dbReference>
<dbReference type="FunFam" id="3.30.1490.10:FF:000001">
    <property type="entry name" value="30S ribosomal protein S8"/>
    <property type="match status" value="1"/>
</dbReference>
<dbReference type="Gene3D" id="3.30.1370.30">
    <property type="match status" value="1"/>
</dbReference>
<dbReference type="Gene3D" id="3.30.1490.10">
    <property type="match status" value="1"/>
</dbReference>
<dbReference type="HAMAP" id="MF_01302_B">
    <property type="entry name" value="Ribosomal_uS8_B"/>
    <property type="match status" value="1"/>
</dbReference>
<dbReference type="InterPro" id="IPR000630">
    <property type="entry name" value="Ribosomal_uS8"/>
</dbReference>
<dbReference type="InterPro" id="IPR047863">
    <property type="entry name" value="Ribosomal_uS8_CS"/>
</dbReference>
<dbReference type="InterPro" id="IPR035987">
    <property type="entry name" value="Ribosomal_uS8_sf"/>
</dbReference>
<dbReference type="NCBIfam" id="NF001109">
    <property type="entry name" value="PRK00136.1"/>
    <property type="match status" value="1"/>
</dbReference>
<dbReference type="PANTHER" id="PTHR11758">
    <property type="entry name" value="40S RIBOSOMAL PROTEIN S15A"/>
    <property type="match status" value="1"/>
</dbReference>
<dbReference type="Pfam" id="PF00410">
    <property type="entry name" value="Ribosomal_S8"/>
    <property type="match status" value="1"/>
</dbReference>
<dbReference type="SUPFAM" id="SSF56047">
    <property type="entry name" value="Ribosomal protein S8"/>
    <property type="match status" value="1"/>
</dbReference>
<dbReference type="PROSITE" id="PS00053">
    <property type="entry name" value="RIBOSOMAL_S8"/>
    <property type="match status" value="1"/>
</dbReference>
<comment type="function">
    <text evidence="1">One of the primary rRNA binding proteins, it binds directly to 16S rRNA central domain where it helps coordinate assembly of the platform of the 30S subunit.</text>
</comment>
<comment type="subunit">
    <text evidence="1">Part of the 30S ribosomal subunit. Contacts proteins S5 and S12.</text>
</comment>
<comment type="similarity">
    <text evidence="1">Belongs to the universal ribosomal protein uS8 family.</text>
</comment>
<organism>
    <name type="scientific">Streptococcus pyogenes serotype M5 (strain Manfredo)</name>
    <dbReference type="NCBI Taxonomy" id="160491"/>
    <lineage>
        <taxon>Bacteria</taxon>
        <taxon>Bacillati</taxon>
        <taxon>Bacillota</taxon>
        <taxon>Bacilli</taxon>
        <taxon>Lactobacillales</taxon>
        <taxon>Streptococcaceae</taxon>
        <taxon>Streptococcus</taxon>
    </lineage>
</organism>
<name>RS8_STRPG</name>
<sequence>MVMTDPIADFLTRIRNANQVKHEVLEVPASNIKKGIAEILKREGFVKNVEVIEDDKQGIIRVFLKYGKNGERVITNLKRISKPGLRVYAKRDDMPKVLNGLGIAIISTSEGLLTDKEARQKNVGGEVIAYVW</sequence>
<keyword id="KW-0687">Ribonucleoprotein</keyword>
<keyword id="KW-0689">Ribosomal protein</keyword>
<keyword id="KW-0694">RNA-binding</keyword>
<keyword id="KW-0699">rRNA-binding</keyword>
<protein>
    <recommendedName>
        <fullName evidence="1">Small ribosomal subunit protein uS8</fullName>
    </recommendedName>
    <alternativeName>
        <fullName evidence="2">30S ribosomal protein S8</fullName>
    </alternativeName>
</protein>
<accession>A2RC28</accession>
<reference key="1">
    <citation type="journal article" date="2007" name="J. Bacteriol.">
        <title>Complete genome of acute rheumatic fever-associated serotype M5 Streptococcus pyogenes strain Manfredo.</title>
        <authorList>
            <person name="Holden M.T.G."/>
            <person name="Scott A."/>
            <person name="Cherevach I."/>
            <person name="Chillingworth T."/>
            <person name="Churcher C."/>
            <person name="Cronin A."/>
            <person name="Dowd L."/>
            <person name="Feltwell T."/>
            <person name="Hamlin N."/>
            <person name="Holroyd S."/>
            <person name="Jagels K."/>
            <person name="Moule S."/>
            <person name="Mungall K."/>
            <person name="Quail M.A."/>
            <person name="Price C."/>
            <person name="Rabbinowitsch E."/>
            <person name="Sharp S."/>
            <person name="Skelton J."/>
            <person name="Whitehead S."/>
            <person name="Barrell B.G."/>
            <person name="Kehoe M."/>
            <person name="Parkhill J."/>
        </authorList>
    </citation>
    <scope>NUCLEOTIDE SEQUENCE [LARGE SCALE GENOMIC DNA]</scope>
    <source>
        <strain>Manfredo</strain>
    </source>
</reference>
<evidence type="ECO:0000255" key="1">
    <source>
        <dbReference type="HAMAP-Rule" id="MF_01302"/>
    </source>
</evidence>
<evidence type="ECO:0000305" key="2"/>
<gene>
    <name evidence="1" type="primary">rpsH</name>
    <name type="ordered locus">SpyM50058</name>
</gene>